<comment type="function">
    <text evidence="1">Associates with the EF-Tu.GDP complex and induces the exchange of GDP to GTP. It remains bound to the aminoacyl-tRNA.EF-Tu.GTP complex up to the GTP hydrolysis stage on the ribosome.</text>
</comment>
<comment type="subcellular location">
    <subcellularLocation>
        <location evidence="1">Cytoplasm</location>
    </subcellularLocation>
</comment>
<comment type="similarity">
    <text evidence="1">Belongs to the EF-Ts family.</text>
</comment>
<reference key="1">
    <citation type="submission" date="2008-08" db="EMBL/GenBank/DDBJ databases">
        <title>Complete sequence of Acidithiobacillus ferrooxidans ATCC 53993.</title>
        <authorList>
            <person name="Lucas S."/>
            <person name="Copeland A."/>
            <person name="Lapidus A."/>
            <person name="Glavina del Rio T."/>
            <person name="Dalin E."/>
            <person name="Tice H."/>
            <person name="Bruce D."/>
            <person name="Goodwin L."/>
            <person name="Pitluck S."/>
            <person name="Sims D."/>
            <person name="Brettin T."/>
            <person name="Detter J.C."/>
            <person name="Han C."/>
            <person name="Kuske C.R."/>
            <person name="Larimer F."/>
            <person name="Land M."/>
            <person name="Hauser L."/>
            <person name="Kyrpides N."/>
            <person name="Lykidis A."/>
            <person name="Borole A.P."/>
        </authorList>
    </citation>
    <scope>NUCLEOTIDE SEQUENCE [LARGE SCALE GENOMIC DNA]</scope>
    <source>
        <strain>ATCC 53993 / BNL-5-31</strain>
    </source>
</reference>
<feature type="chain" id="PRO_1000116681" description="Elongation factor Ts">
    <location>
        <begin position="1"/>
        <end position="292"/>
    </location>
</feature>
<feature type="region of interest" description="Involved in Mg(2+) ion dislocation from EF-Tu" evidence="1">
    <location>
        <begin position="81"/>
        <end position="84"/>
    </location>
</feature>
<sequence>MAISAQQVKELRERSGAGMMECKTVLTEAEGDMEAAIDLLRARGLAKADKKASRVAAEGVIVTALSEDQKRGVVLEVNCETDFVAKNEDFLALAKDCAGQALAQGLKDAEALLADAGVEERRKGLVSKLGENISLRRLQHLQVMDGVIGAYVHGSRIGVLVALEGQAATSELGRDVAMHVAAARPEVIHPGEVSPERLNREKEILITQAADSGKPADIIEKMISGRLNKLLNEIALTGQPFVKDPDRSVGQLIQSFPGVEVLEFVRFEVGEGIEKAPTADFATEVMAQVRGS</sequence>
<organism>
    <name type="scientific">Acidithiobacillus ferrooxidans (strain ATCC 53993 / BNL-5-31)</name>
    <name type="common">Leptospirillum ferrooxidans (ATCC 53993)</name>
    <dbReference type="NCBI Taxonomy" id="380394"/>
    <lineage>
        <taxon>Bacteria</taxon>
        <taxon>Pseudomonadati</taxon>
        <taxon>Pseudomonadota</taxon>
        <taxon>Acidithiobacillia</taxon>
        <taxon>Acidithiobacillales</taxon>
        <taxon>Acidithiobacillaceae</taxon>
        <taxon>Acidithiobacillus</taxon>
    </lineage>
</organism>
<dbReference type="EMBL" id="CP001132">
    <property type="protein sequence ID" value="ACH83399.1"/>
    <property type="molecule type" value="Genomic_DNA"/>
</dbReference>
<dbReference type="RefSeq" id="WP_012536522.1">
    <property type="nucleotide sequence ID" value="NC_011206.1"/>
</dbReference>
<dbReference type="SMR" id="B5EQP9"/>
<dbReference type="GeneID" id="65280666"/>
<dbReference type="KEGG" id="afe:Lferr_1161"/>
<dbReference type="eggNOG" id="COG0264">
    <property type="taxonomic scope" value="Bacteria"/>
</dbReference>
<dbReference type="HOGENOM" id="CLU_047155_0_2_6"/>
<dbReference type="GO" id="GO:0005737">
    <property type="term" value="C:cytoplasm"/>
    <property type="evidence" value="ECO:0007669"/>
    <property type="project" value="UniProtKB-SubCell"/>
</dbReference>
<dbReference type="GO" id="GO:0003746">
    <property type="term" value="F:translation elongation factor activity"/>
    <property type="evidence" value="ECO:0007669"/>
    <property type="project" value="UniProtKB-UniRule"/>
</dbReference>
<dbReference type="CDD" id="cd14275">
    <property type="entry name" value="UBA_EF-Ts"/>
    <property type="match status" value="1"/>
</dbReference>
<dbReference type="FunFam" id="1.10.286.20:FF:000001">
    <property type="entry name" value="Elongation factor Ts"/>
    <property type="match status" value="1"/>
</dbReference>
<dbReference type="FunFam" id="1.10.8.10:FF:000001">
    <property type="entry name" value="Elongation factor Ts"/>
    <property type="match status" value="1"/>
</dbReference>
<dbReference type="Gene3D" id="1.10.286.20">
    <property type="match status" value="1"/>
</dbReference>
<dbReference type="Gene3D" id="1.10.8.10">
    <property type="entry name" value="DNA helicase RuvA subunit, C-terminal domain"/>
    <property type="match status" value="1"/>
</dbReference>
<dbReference type="Gene3D" id="3.30.479.20">
    <property type="entry name" value="Elongation factor Ts, dimerisation domain"/>
    <property type="match status" value="2"/>
</dbReference>
<dbReference type="HAMAP" id="MF_00050">
    <property type="entry name" value="EF_Ts"/>
    <property type="match status" value="1"/>
</dbReference>
<dbReference type="InterPro" id="IPR036402">
    <property type="entry name" value="EF-Ts_dimer_sf"/>
</dbReference>
<dbReference type="InterPro" id="IPR001816">
    <property type="entry name" value="Transl_elong_EFTs/EF1B"/>
</dbReference>
<dbReference type="InterPro" id="IPR014039">
    <property type="entry name" value="Transl_elong_EFTs/EF1B_dimer"/>
</dbReference>
<dbReference type="InterPro" id="IPR018101">
    <property type="entry name" value="Transl_elong_Ts_CS"/>
</dbReference>
<dbReference type="InterPro" id="IPR009060">
    <property type="entry name" value="UBA-like_sf"/>
</dbReference>
<dbReference type="NCBIfam" id="TIGR00116">
    <property type="entry name" value="tsf"/>
    <property type="match status" value="1"/>
</dbReference>
<dbReference type="PANTHER" id="PTHR11741">
    <property type="entry name" value="ELONGATION FACTOR TS"/>
    <property type="match status" value="1"/>
</dbReference>
<dbReference type="PANTHER" id="PTHR11741:SF0">
    <property type="entry name" value="ELONGATION FACTOR TS, MITOCHONDRIAL"/>
    <property type="match status" value="1"/>
</dbReference>
<dbReference type="Pfam" id="PF00889">
    <property type="entry name" value="EF_TS"/>
    <property type="match status" value="1"/>
</dbReference>
<dbReference type="SUPFAM" id="SSF54713">
    <property type="entry name" value="Elongation factor Ts (EF-Ts), dimerisation domain"/>
    <property type="match status" value="2"/>
</dbReference>
<dbReference type="SUPFAM" id="SSF46934">
    <property type="entry name" value="UBA-like"/>
    <property type="match status" value="1"/>
</dbReference>
<dbReference type="PROSITE" id="PS01127">
    <property type="entry name" value="EF_TS_2"/>
    <property type="match status" value="1"/>
</dbReference>
<name>EFTS_ACIF5</name>
<gene>
    <name evidence="1" type="primary">tsf</name>
    <name type="ordered locus">Lferr_1161</name>
</gene>
<evidence type="ECO:0000255" key="1">
    <source>
        <dbReference type="HAMAP-Rule" id="MF_00050"/>
    </source>
</evidence>
<accession>B5EQP9</accession>
<proteinExistence type="inferred from homology"/>
<protein>
    <recommendedName>
        <fullName evidence="1">Elongation factor Ts</fullName>
        <shortName evidence="1">EF-Ts</shortName>
    </recommendedName>
</protein>
<keyword id="KW-0963">Cytoplasm</keyword>
<keyword id="KW-0251">Elongation factor</keyword>
<keyword id="KW-0648">Protein biosynthesis</keyword>